<reference key="1">
    <citation type="journal article" date="2007" name="Genome Biol.">
        <title>Characterization and modeling of the Haemophilus influenzae core and supragenomes based on the complete genomic sequences of Rd and 12 clinical nontypeable strains.</title>
        <authorList>
            <person name="Hogg J.S."/>
            <person name="Hu F.Z."/>
            <person name="Janto B."/>
            <person name="Boissy R."/>
            <person name="Hayes J."/>
            <person name="Keefe R."/>
            <person name="Post J.C."/>
            <person name="Ehrlich G.D."/>
        </authorList>
    </citation>
    <scope>NUCLEOTIDE SEQUENCE [LARGE SCALE GENOMIC DNA]</scope>
    <source>
        <strain>PittEE</strain>
    </source>
</reference>
<feature type="chain" id="PRO_1000003971" description="Small ribosomal subunit protein uS2">
    <location>
        <begin position="1"/>
        <end position="240"/>
    </location>
</feature>
<organism>
    <name type="scientific">Haemophilus influenzae (strain PittEE)</name>
    <dbReference type="NCBI Taxonomy" id="374930"/>
    <lineage>
        <taxon>Bacteria</taxon>
        <taxon>Pseudomonadati</taxon>
        <taxon>Pseudomonadota</taxon>
        <taxon>Gammaproteobacteria</taxon>
        <taxon>Pasteurellales</taxon>
        <taxon>Pasteurellaceae</taxon>
        <taxon>Haemophilus</taxon>
    </lineage>
</organism>
<protein>
    <recommendedName>
        <fullName evidence="1">Small ribosomal subunit protein uS2</fullName>
    </recommendedName>
    <alternativeName>
        <fullName evidence="2">30S ribosomal protein S2</fullName>
    </alternativeName>
</protein>
<gene>
    <name evidence="1" type="primary">rpsB</name>
    <name type="ordered locus">CGSHiEE_07450</name>
</gene>
<sequence length="240" mass="26264">MAQVSMRDMINAGVHFGHQTRYWNPQMKPFIFGARNGVHIINLEKTLPLFNEALAELTRIASNNGKVLFVGTKRAASEAVQAAALDCQQYYVNHRWLGGMLTNWKTVRQSIKRLKDLETQSQDGTFDKLTKKEALMRSREMEKLELSLGGIKDMGGLPDALFVIGADHEHIAVKEANNLGIPVFAIVDTNSTPAGVDFVIPGNDDATRAIQLYVSAAAAAVKEGRGNEAQVAEELAADAE</sequence>
<comment type="similarity">
    <text evidence="1">Belongs to the universal ribosomal protein uS2 family.</text>
</comment>
<keyword id="KW-0687">Ribonucleoprotein</keyword>
<keyword id="KW-0689">Ribosomal protein</keyword>
<evidence type="ECO:0000255" key="1">
    <source>
        <dbReference type="HAMAP-Rule" id="MF_00291"/>
    </source>
</evidence>
<evidence type="ECO:0000305" key="2"/>
<dbReference type="EMBL" id="CP000671">
    <property type="protein sequence ID" value="ABQ98813.1"/>
    <property type="molecule type" value="Genomic_DNA"/>
</dbReference>
<dbReference type="SMR" id="A5UDG2"/>
<dbReference type="KEGG" id="hip:CGSHiEE_07450"/>
<dbReference type="HOGENOM" id="CLU_040318_1_2_6"/>
<dbReference type="GO" id="GO:0022627">
    <property type="term" value="C:cytosolic small ribosomal subunit"/>
    <property type="evidence" value="ECO:0007669"/>
    <property type="project" value="TreeGrafter"/>
</dbReference>
<dbReference type="GO" id="GO:0003735">
    <property type="term" value="F:structural constituent of ribosome"/>
    <property type="evidence" value="ECO:0007669"/>
    <property type="project" value="InterPro"/>
</dbReference>
<dbReference type="GO" id="GO:0006412">
    <property type="term" value="P:translation"/>
    <property type="evidence" value="ECO:0007669"/>
    <property type="project" value="UniProtKB-UniRule"/>
</dbReference>
<dbReference type="CDD" id="cd01425">
    <property type="entry name" value="RPS2"/>
    <property type="match status" value="1"/>
</dbReference>
<dbReference type="FunFam" id="1.10.287.610:FF:000001">
    <property type="entry name" value="30S ribosomal protein S2"/>
    <property type="match status" value="1"/>
</dbReference>
<dbReference type="Gene3D" id="3.40.50.10490">
    <property type="entry name" value="Glucose-6-phosphate isomerase like protein, domain 1"/>
    <property type="match status" value="1"/>
</dbReference>
<dbReference type="Gene3D" id="1.10.287.610">
    <property type="entry name" value="Helix hairpin bin"/>
    <property type="match status" value="1"/>
</dbReference>
<dbReference type="HAMAP" id="MF_00291_B">
    <property type="entry name" value="Ribosomal_uS2_B"/>
    <property type="match status" value="1"/>
</dbReference>
<dbReference type="InterPro" id="IPR001865">
    <property type="entry name" value="Ribosomal_uS2"/>
</dbReference>
<dbReference type="InterPro" id="IPR005706">
    <property type="entry name" value="Ribosomal_uS2_bac/mit/plastid"/>
</dbReference>
<dbReference type="InterPro" id="IPR018130">
    <property type="entry name" value="Ribosomal_uS2_CS"/>
</dbReference>
<dbReference type="InterPro" id="IPR023591">
    <property type="entry name" value="Ribosomal_uS2_flav_dom_sf"/>
</dbReference>
<dbReference type="NCBIfam" id="TIGR01011">
    <property type="entry name" value="rpsB_bact"/>
    <property type="match status" value="1"/>
</dbReference>
<dbReference type="PANTHER" id="PTHR12534">
    <property type="entry name" value="30S RIBOSOMAL PROTEIN S2 PROKARYOTIC AND ORGANELLAR"/>
    <property type="match status" value="1"/>
</dbReference>
<dbReference type="PANTHER" id="PTHR12534:SF0">
    <property type="entry name" value="SMALL RIBOSOMAL SUBUNIT PROTEIN US2M"/>
    <property type="match status" value="1"/>
</dbReference>
<dbReference type="Pfam" id="PF00318">
    <property type="entry name" value="Ribosomal_S2"/>
    <property type="match status" value="1"/>
</dbReference>
<dbReference type="PRINTS" id="PR00395">
    <property type="entry name" value="RIBOSOMALS2"/>
</dbReference>
<dbReference type="SUPFAM" id="SSF52313">
    <property type="entry name" value="Ribosomal protein S2"/>
    <property type="match status" value="1"/>
</dbReference>
<dbReference type="PROSITE" id="PS00962">
    <property type="entry name" value="RIBOSOMAL_S2_1"/>
    <property type="match status" value="1"/>
</dbReference>
<dbReference type="PROSITE" id="PS00963">
    <property type="entry name" value="RIBOSOMAL_S2_2"/>
    <property type="match status" value="1"/>
</dbReference>
<accession>A5UDG2</accession>
<proteinExistence type="inferred from homology"/>
<name>RS2_HAEIE</name>